<comment type="similarity">
    <text evidence="1">Belongs to the UPF0178 family.</text>
</comment>
<evidence type="ECO:0000255" key="1">
    <source>
        <dbReference type="HAMAP-Rule" id="MF_00489"/>
    </source>
</evidence>
<name>YAII_SALPB</name>
<gene>
    <name evidence="1" type="primary">yaiI</name>
    <name type="ordered locus">SPAB_03203</name>
</gene>
<organism>
    <name type="scientific">Salmonella paratyphi B (strain ATCC BAA-1250 / SPB7)</name>
    <dbReference type="NCBI Taxonomy" id="1016998"/>
    <lineage>
        <taxon>Bacteria</taxon>
        <taxon>Pseudomonadati</taxon>
        <taxon>Pseudomonadota</taxon>
        <taxon>Gammaproteobacteria</taxon>
        <taxon>Enterobacterales</taxon>
        <taxon>Enterobacteriaceae</taxon>
        <taxon>Salmonella</taxon>
    </lineage>
</organism>
<dbReference type="EMBL" id="CP000886">
    <property type="protein sequence ID" value="ABX68564.1"/>
    <property type="molecule type" value="Genomic_DNA"/>
</dbReference>
<dbReference type="RefSeq" id="WP_000158136.1">
    <property type="nucleotide sequence ID" value="NC_010102.1"/>
</dbReference>
<dbReference type="KEGG" id="spq:SPAB_03203"/>
<dbReference type="PATRIC" id="fig|1016998.12.peg.3023"/>
<dbReference type="HOGENOM" id="CLU_106619_1_0_6"/>
<dbReference type="BioCyc" id="SENT1016998:SPAB_RS13090-MONOMER"/>
<dbReference type="Proteomes" id="UP000008556">
    <property type="component" value="Chromosome"/>
</dbReference>
<dbReference type="CDD" id="cd18720">
    <property type="entry name" value="PIN_YqxD-like"/>
    <property type="match status" value="1"/>
</dbReference>
<dbReference type="HAMAP" id="MF_00489">
    <property type="entry name" value="UPF0178"/>
    <property type="match status" value="1"/>
</dbReference>
<dbReference type="InterPro" id="IPR003791">
    <property type="entry name" value="UPF0178"/>
</dbReference>
<dbReference type="NCBIfam" id="NF001095">
    <property type="entry name" value="PRK00124.1"/>
    <property type="match status" value="1"/>
</dbReference>
<dbReference type="PANTHER" id="PTHR35146">
    <property type="entry name" value="UPF0178 PROTEIN YAII"/>
    <property type="match status" value="1"/>
</dbReference>
<dbReference type="PANTHER" id="PTHR35146:SF1">
    <property type="entry name" value="UPF0178 PROTEIN YAII"/>
    <property type="match status" value="1"/>
</dbReference>
<dbReference type="Pfam" id="PF02639">
    <property type="entry name" value="DUF188"/>
    <property type="match status" value="1"/>
</dbReference>
<sequence length="151" mass="16972">MTIWVDADACPNVIKEILYRAAERMQLPLILVANQALRVPPSRFIRTLRVAAGFDVADNEIVRQCEAGDLVITADIPLAAEVLEKGAAALNPRGERYSDATIRERLTMRDFMDTLRASGVQTGGPNTLSPRDRQHFAAELDKWWLENQRKK</sequence>
<feature type="chain" id="PRO_1000081383" description="UPF0178 protein YaiI">
    <location>
        <begin position="1"/>
        <end position="151"/>
    </location>
</feature>
<reference key="1">
    <citation type="submission" date="2007-11" db="EMBL/GenBank/DDBJ databases">
        <authorList>
            <consortium name="The Salmonella enterica serovar Paratyphi B Genome Sequencing Project"/>
            <person name="McClelland M."/>
            <person name="Sanderson E.K."/>
            <person name="Porwollik S."/>
            <person name="Spieth J."/>
            <person name="Clifton W.S."/>
            <person name="Fulton R."/>
            <person name="Cordes M."/>
            <person name="Wollam A."/>
            <person name="Shah N."/>
            <person name="Pepin K."/>
            <person name="Bhonagiri V."/>
            <person name="Nash W."/>
            <person name="Johnson M."/>
            <person name="Thiruvilangam P."/>
            <person name="Wilson R."/>
        </authorList>
    </citation>
    <scope>NUCLEOTIDE SEQUENCE [LARGE SCALE GENOMIC DNA]</scope>
    <source>
        <strain>ATCC BAA-1250 / SPB7</strain>
    </source>
</reference>
<proteinExistence type="inferred from homology"/>
<protein>
    <recommendedName>
        <fullName evidence="1">UPF0178 protein YaiI</fullName>
    </recommendedName>
</protein>
<accession>A9MX51</accession>